<comment type="function">
    <text evidence="1">Extracellular aminopeptidase that allows assimilation of proteinaceous substrates.</text>
</comment>
<comment type="cofactor">
    <cofactor evidence="1">
        <name>Zn(2+)</name>
        <dbReference type="ChEBI" id="CHEBI:29105"/>
    </cofactor>
    <text evidence="1">Binds 2 Zn(2+) ions per subunit.</text>
</comment>
<comment type="subunit">
    <text evidence="1">Monomer.</text>
</comment>
<comment type="subcellular location">
    <subcellularLocation>
        <location evidence="1">Secreted</location>
    </subcellularLocation>
</comment>
<comment type="similarity">
    <text evidence="3">Belongs to the peptidase M28 family. M28E subfamily.</text>
</comment>
<proteinExistence type="inferred from homology"/>
<dbReference type="EC" id="3.4.11.-"/>
<dbReference type="EMBL" id="CH476631">
    <property type="protein sequence ID" value="EDN92754.1"/>
    <property type="molecule type" value="Genomic_DNA"/>
</dbReference>
<dbReference type="RefSeq" id="XP_001590877.1">
    <property type="nucleotide sequence ID" value="XM_001590827.1"/>
</dbReference>
<dbReference type="SMR" id="A7ETG2"/>
<dbReference type="FunCoup" id="A7ETG2">
    <property type="interactions" value="25"/>
</dbReference>
<dbReference type="STRING" id="665079.A7ETG2"/>
<dbReference type="MEROPS" id="M28.022"/>
<dbReference type="GlyCosmos" id="A7ETG2">
    <property type="glycosylation" value="1 site, No reported glycans"/>
</dbReference>
<dbReference type="EnsemblFungi" id="EDN92754">
    <property type="protein sequence ID" value="EDN92754"/>
    <property type="gene ID" value="SS1G_08618"/>
</dbReference>
<dbReference type="GeneID" id="5486672"/>
<dbReference type="KEGG" id="ssl:SS1G_08618"/>
<dbReference type="VEuPathDB" id="FungiDB:sscle_10g078670"/>
<dbReference type="eggNOG" id="KOG2195">
    <property type="taxonomic scope" value="Eukaryota"/>
</dbReference>
<dbReference type="HOGENOM" id="CLU_025866_0_0_1"/>
<dbReference type="InParanoid" id="A7ETG2"/>
<dbReference type="OMA" id="GMLQQDM"/>
<dbReference type="OrthoDB" id="2214at2759"/>
<dbReference type="Proteomes" id="UP000001312">
    <property type="component" value="Unassembled WGS sequence"/>
</dbReference>
<dbReference type="GO" id="GO:0005576">
    <property type="term" value="C:extracellular region"/>
    <property type="evidence" value="ECO:0007669"/>
    <property type="project" value="UniProtKB-SubCell"/>
</dbReference>
<dbReference type="GO" id="GO:0004177">
    <property type="term" value="F:aminopeptidase activity"/>
    <property type="evidence" value="ECO:0007669"/>
    <property type="project" value="UniProtKB-KW"/>
</dbReference>
<dbReference type="GO" id="GO:0046872">
    <property type="term" value="F:metal ion binding"/>
    <property type="evidence" value="ECO:0007669"/>
    <property type="project" value="UniProtKB-KW"/>
</dbReference>
<dbReference type="GO" id="GO:0008235">
    <property type="term" value="F:metalloexopeptidase activity"/>
    <property type="evidence" value="ECO:0007669"/>
    <property type="project" value="InterPro"/>
</dbReference>
<dbReference type="GO" id="GO:0006508">
    <property type="term" value="P:proteolysis"/>
    <property type="evidence" value="ECO:0000318"/>
    <property type="project" value="GO_Central"/>
</dbReference>
<dbReference type="CDD" id="cd03879">
    <property type="entry name" value="M28_AAP"/>
    <property type="match status" value="1"/>
</dbReference>
<dbReference type="FunFam" id="3.40.630.10:FF:000042">
    <property type="entry name" value="Peptide hydrolase"/>
    <property type="match status" value="1"/>
</dbReference>
<dbReference type="Gene3D" id="3.40.630.10">
    <property type="entry name" value="Zn peptidases"/>
    <property type="match status" value="1"/>
</dbReference>
<dbReference type="InterPro" id="IPR045175">
    <property type="entry name" value="M28_fam"/>
</dbReference>
<dbReference type="InterPro" id="IPR007484">
    <property type="entry name" value="Peptidase_M28"/>
</dbReference>
<dbReference type="PANTHER" id="PTHR12147:SF56">
    <property type="entry name" value="AMINOPEPTIDASE YDR415C-RELATED"/>
    <property type="match status" value="1"/>
</dbReference>
<dbReference type="PANTHER" id="PTHR12147">
    <property type="entry name" value="METALLOPEPTIDASE M28 FAMILY MEMBER"/>
    <property type="match status" value="1"/>
</dbReference>
<dbReference type="Pfam" id="PF04389">
    <property type="entry name" value="Peptidase_M28"/>
    <property type="match status" value="1"/>
</dbReference>
<dbReference type="SUPFAM" id="SSF53187">
    <property type="entry name" value="Zn-dependent exopeptidases"/>
    <property type="match status" value="1"/>
</dbReference>
<keyword id="KW-0031">Aminopeptidase</keyword>
<keyword id="KW-1015">Disulfide bond</keyword>
<keyword id="KW-0325">Glycoprotein</keyword>
<keyword id="KW-0378">Hydrolase</keyword>
<keyword id="KW-0479">Metal-binding</keyword>
<keyword id="KW-0645">Protease</keyword>
<keyword id="KW-1185">Reference proteome</keyword>
<keyword id="KW-0964">Secreted</keyword>
<keyword id="KW-0732">Signal</keyword>
<keyword id="KW-0862">Zinc</keyword>
<keyword id="KW-0865">Zymogen</keyword>
<gene>
    <name type="primary">lap1</name>
    <name type="ORF">SS1G_08618</name>
</gene>
<feature type="signal peptide" evidence="2">
    <location>
        <begin position="1"/>
        <end position="18"/>
    </location>
</feature>
<feature type="propeptide" id="PRO_0000412446" evidence="1">
    <location>
        <begin position="19"/>
        <end position="86"/>
    </location>
</feature>
<feature type="chain" id="PRO_0000412447" description="Leucine aminopeptidase 1">
    <location>
        <begin position="87"/>
        <end position="387"/>
    </location>
</feature>
<feature type="binding site" evidence="1">
    <location>
        <position position="187"/>
    </location>
    <ligand>
        <name>Zn(2+)</name>
        <dbReference type="ChEBI" id="CHEBI:29105"/>
        <label>1</label>
    </ligand>
</feature>
<feature type="binding site" evidence="1">
    <location>
        <position position="206"/>
    </location>
    <ligand>
        <name>Zn(2+)</name>
        <dbReference type="ChEBI" id="CHEBI:29105"/>
        <label>1</label>
    </ligand>
</feature>
<feature type="binding site" evidence="1">
    <location>
        <position position="206"/>
    </location>
    <ligand>
        <name>Zn(2+)</name>
        <dbReference type="ChEBI" id="CHEBI:29105"/>
        <label>2</label>
        <note>catalytic</note>
    </ligand>
</feature>
<feature type="binding site" evidence="1">
    <location>
        <position position="245"/>
    </location>
    <ligand>
        <name>Zn(2+)</name>
        <dbReference type="ChEBI" id="CHEBI:29105"/>
        <label>2</label>
        <note>catalytic</note>
    </ligand>
</feature>
<feature type="binding site" evidence="1">
    <location>
        <position position="272"/>
    </location>
    <ligand>
        <name>Zn(2+)</name>
        <dbReference type="ChEBI" id="CHEBI:29105"/>
        <label>1</label>
    </ligand>
</feature>
<feature type="binding site" evidence="1">
    <location>
        <position position="354"/>
    </location>
    <ligand>
        <name>Zn(2+)</name>
        <dbReference type="ChEBI" id="CHEBI:29105"/>
        <label>2</label>
        <note>catalytic</note>
    </ligand>
</feature>
<feature type="glycosylation site" description="N-linked (GlcNAc...) asparagine" evidence="2">
    <location>
        <position position="179"/>
    </location>
</feature>
<feature type="disulfide bond" evidence="1">
    <location>
        <begin position="321"/>
        <end position="325"/>
    </location>
</feature>
<reference key="1">
    <citation type="journal article" date="2011" name="PLoS Genet.">
        <title>Genomic analysis of the necrotrophic fungal pathogens Sclerotinia sclerotiorum and Botrytis cinerea.</title>
        <authorList>
            <person name="Amselem J."/>
            <person name="Cuomo C.A."/>
            <person name="van Kan J.A.L."/>
            <person name="Viaud M."/>
            <person name="Benito E.P."/>
            <person name="Couloux A."/>
            <person name="Coutinho P.M."/>
            <person name="de Vries R.P."/>
            <person name="Dyer P.S."/>
            <person name="Fillinger S."/>
            <person name="Fournier E."/>
            <person name="Gout L."/>
            <person name="Hahn M."/>
            <person name="Kohn L."/>
            <person name="Lapalu N."/>
            <person name="Plummer K.M."/>
            <person name="Pradier J.-M."/>
            <person name="Quevillon E."/>
            <person name="Sharon A."/>
            <person name="Simon A."/>
            <person name="ten Have A."/>
            <person name="Tudzynski B."/>
            <person name="Tudzynski P."/>
            <person name="Wincker P."/>
            <person name="Andrew M."/>
            <person name="Anthouard V."/>
            <person name="Beever R.E."/>
            <person name="Beffa R."/>
            <person name="Benoit I."/>
            <person name="Bouzid O."/>
            <person name="Brault B."/>
            <person name="Chen Z."/>
            <person name="Choquer M."/>
            <person name="Collemare J."/>
            <person name="Cotton P."/>
            <person name="Danchin E.G."/>
            <person name="Da Silva C."/>
            <person name="Gautier A."/>
            <person name="Giraud C."/>
            <person name="Giraud T."/>
            <person name="Gonzalez C."/>
            <person name="Grossetete S."/>
            <person name="Gueldener U."/>
            <person name="Henrissat B."/>
            <person name="Howlett B.J."/>
            <person name="Kodira C."/>
            <person name="Kretschmer M."/>
            <person name="Lappartient A."/>
            <person name="Leroch M."/>
            <person name="Levis C."/>
            <person name="Mauceli E."/>
            <person name="Neuveglise C."/>
            <person name="Oeser B."/>
            <person name="Pearson M."/>
            <person name="Poulain J."/>
            <person name="Poussereau N."/>
            <person name="Quesneville H."/>
            <person name="Rascle C."/>
            <person name="Schumacher J."/>
            <person name="Segurens B."/>
            <person name="Sexton A."/>
            <person name="Silva E."/>
            <person name="Sirven C."/>
            <person name="Soanes D.M."/>
            <person name="Talbot N.J."/>
            <person name="Templeton M."/>
            <person name="Yandava C."/>
            <person name="Yarden O."/>
            <person name="Zeng Q."/>
            <person name="Rollins J.A."/>
            <person name="Lebrun M.-H."/>
            <person name="Dickman M."/>
        </authorList>
    </citation>
    <scope>NUCLEOTIDE SEQUENCE [LARGE SCALE GENOMIC DNA]</scope>
    <source>
        <strain>ATCC 18683 / 1980 / Ss-1</strain>
    </source>
</reference>
<organism>
    <name type="scientific">Sclerotinia sclerotiorum (strain ATCC 18683 / 1980 / Ss-1)</name>
    <name type="common">White mold</name>
    <name type="synonym">Whetzelinia sclerotiorum</name>
    <dbReference type="NCBI Taxonomy" id="665079"/>
    <lineage>
        <taxon>Eukaryota</taxon>
        <taxon>Fungi</taxon>
        <taxon>Dikarya</taxon>
        <taxon>Ascomycota</taxon>
        <taxon>Pezizomycotina</taxon>
        <taxon>Leotiomycetes</taxon>
        <taxon>Helotiales</taxon>
        <taxon>Sclerotiniaceae</taxon>
        <taxon>Sclerotinia</taxon>
    </lineage>
</organism>
<sequence>MKFTNLSLLALSASLASARFVEQHETDQVILNSNAVTDERYLIETAPGKQQWVTEEEKWELRRNGQNFMDITETPELGTLRTSSVKVKFPSKPTLQKDLKPLLEDLSKSKMHKNLETFTSFHTRYYKSDYGRQSSEWLLEQVQTLIKDAGADKYGAHARHFKHSWGQNSIIATIPGQKNSTVVIGAHQDSINLFLPSILSAPGADDDGSGTVTILEALRVLLTSKDIIKGKGENTIEFHWYSAEEGGLLGSQAIFSEYEKTGRDVKAMLQQDMTGYTQKTLDAGEPESVGVITDFVDPDLTDFIKKIVTEYCTIDFVETRCGYACSDHASASKAGYPSAFVIESDFKYSDDRIHTSGDTLNFLNFDHMLQHARLTLGLVYELAFAKL</sequence>
<protein>
    <recommendedName>
        <fullName>Leucine aminopeptidase 1</fullName>
        <ecNumber>3.4.11.-</ecNumber>
    </recommendedName>
    <alternativeName>
        <fullName>Leucyl aminopeptidase 1</fullName>
        <shortName>LAP1</shortName>
    </alternativeName>
</protein>
<name>LAP1_SCLS1</name>
<evidence type="ECO:0000250" key="1"/>
<evidence type="ECO:0000255" key="2"/>
<evidence type="ECO:0000305" key="3"/>
<accession>A7ETG2</accession>